<evidence type="ECO:0000255" key="1">
    <source>
        <dbReference type="HAMAP-Rule" id="MF_01846"/>
    </source>
</evidence>
<gene>
    <name evidence="1" type="primary">nudI</name>
    <name type="ordered locus">SPA0568</name>
</gene>
<proteinExistence type="inferred from homology"/>
<feature type="chain" id="PRO_0000342137" description="Nucleoside triphosphatase NudI">
    <location>
        <begin position="1"/>
        <end position="141"/>
    </location>
</feature>
<feature type="domain" description="Nudix hydrolase" evidence="1">
    <location>
        <begin position="1"/>
        <end position="141"/>
    </location>
</feature>
<feature type="short sequence motif" description="Nudix box">
    <location>
        <begin position="38"/>
        <end position="59"/>
    </location>
</feature>
<keyword id="KW-0378">Hydrolase</keyword>
<keyword id="KW-0460">Magnesium</keyword>
<accession>Q5PC77</accession>
<organism>
    <name type="scientific">Salmonella paratyphi A (strain ATCC 9150 / SARB42)</name>
    <dbReference type="NCBI Taxonomy" id="295319"/>
    <lineage>
        <taxon>Bacteria</taxon>
        <taxon>Pseudomonadati</taxon>
        <taxon>Pseudomonadota</taxon>
        <taxon>Gammaproteobacteria</taxon>
        <taxon>Enterobacterales</taxon>
        <taxon>Enterobacteriaceae</taxon>
        <taxon>Salmonella</taxon>
    </lineage>
</organism>
<name>NUDI_SALPA</name>
<sequence length="141" mass="16288">MRQRTIVCPLIQNDGCYLLCKMADNRGVFPGQWALSGGGVEPGERIEEALRREIREELGEQLILSDITPWTFRDDIRVKTYADGRQEEIYMIYLIFDCVSANRDICINDEFQDYAWVKPEELALYDLNVATRHTLALKGLL</sequence>
<protein>
    <recommendedName>
        <fullName evidence="1">Nucleoside triphosphatase NudI</fullName>
        <ecNumber evidence="1">3.6.1.9</ecNumber>
    </recommendedName>
    <alternativeName>
        <fullName evidence="1">Nucleotide diphosphatase NudI</fullName>
    </alternativeName>
    <alternativeName>
        <fullName evidence="1">Pyrimidine deoxynucleoside triphosphate diphosphatase</fullName>
    </alternativeName>
    <alternativeName>
        <fullName evidence="1">dCTP diphosphatase</fullName>
        <ecNumber evidence="1">3.6.1.12</ecNumber>
    </alternativeName>
    <alternativeName>
        <fullName evidence="1">dTTP diphosphatase</fullName>
        <ecNumber evidence="1">3.6.1.-</ecNumber>
    </alternativeName>
    <alternativeName>
        <fullName evidence="1">dUTP diphosphatase</fullName>
        <ecNumber evidence="1">3.6.1.23</ecNumber>
    </alternativeName>
</protein>
<reference key="1">
    <citation type="journal article" date="2004" name="Nat. Genet.">
        <title>Comparison of genome degradation in Paratyphi A and Typhi, human-restricted serovars of Salmonella enterica that cause typhoid.</title>
        <authorList>
            <person name="McClelland M."/>
            <person name="Sanderson K.E."/>
            <person name="Clifton S.W."/>
            <person name="Latreille P."/>
            <person name="Porwollik S."/>
            <person name="Sabo A."/>
            <person name="Meyer R."/>
            <person name="Bieri T."/>
            <person name="Ozersky P."/>
            <person name="McLellan M."/>
            <person name="Harkins C.R."/>
            <person name="Wang C."/>
            <person name="Nguyen C."/>
            <person name="Berghoff A."/>
            <person name="Elliott G."/>
            <person name="Kohlberg S."/>
            <person name="Strong C."/>
            <person name="Du F."/>
            <person name="Carter J."/>
            <person name="Kremizki C."/>
            <person name="Layman D."/>
            <person name="Leonard S."/>
            <person name="Sun H."/>
            <person name="Fulton L."/>
            <person name="Nash W."/>
            <person name="Miner T."/>
            <person name="Minx P."/>
            <person name="Delehaunty K."/>
            <person name="Fronick C."/>
            <person name="Magrini V."/>
            <person name="Nhan M."/>
            <person name="Warren W."/>
            <person name="Florea L."/>
            <person name="Spieth J."/>
            <person name="Wilson R.K."/>
        </authorList>
    </citation>
    <scope>NUCLEOTIDE SEQUENCE [LARGE SCALE GENOMIC DNA]</scope>
    <source>
        <strain>ATCC 9150 / SARB42</strain>
    </source>
</reference>
<comment type="function">
    <text evidence="1">Catalyzes the hydrolysis of nucleoside triphosphates, with a preference for pyrimidine deoxynucleoside triphosphates (dUTP, dTTP and dCTP).</text>
</comment>
<comment type="catalytic activity">
    <reaction evidence="1">
        <text>a ribonucleoside 5'-triphosphate + H2O = a ribonucleoside 5'-phosphate + diphosphate + H(+)</text>
        <dbReference type="Rhea" id="RHEA:23996"/>
        <dbReference type="ChEBI" id="CHEBI:15377"/>
        <dbReference type="ChEBI" id="CHEBI:15378"/>
        <dbReference type="ChEBI" id="CHEBI:33019"/>
        <dbReference type="ChEBI" id="CHEBI:58043"/>
        <dbReference type="ChEBI" id="CHEBI:61557"/>
        <dbReference type="EC" id="3.6.1.9"/>
    </reaction>
</comment>
<comment type="catalytic activity">
    <reaction evidence="1">
        <text>a 2'-deoxyribonucleoside 5'-triphosphate + H2O = a 2'-deoxyribonucleoside 5'-phosphate + diphosphate + H(+)</text>
        <dbReference type="Rhea" id="RHEA:44644"/>
        <dbReference type="ChEBI" id="CHEBI:15377"/>
        <dbReference type="ChEBI" id="CHEBI:15378"/>
        <dbReference type="ChEBI" id="CHEBI:33019"/>
        <dbReference type="ChEBI" id="CHEBI:61560"/>
        <dbReference type="ChEBI" id="CHEBI:65317"/>
        <dbReference type="EC" id="3.6.1.9"/>
    </reaction>
</comment>
<comment type="catalytic activity">
    <reaction evidence="1">
        <text>dUTP + H2O = dUMP + diphosphate + H(+)</text>
        <dbReference type="Rhea" id="RHEA:10248"/>
        <dbReference type="ChEBI" id="CHEBI:15377"/>
        <dbReference type="ChEBI" id="CHEBI:15378"/>
        <dbReference type="ChEBI" id="CHEBI:33019"/>
        <dbReference type="ChEBI" id="CHEBI:61555"/>
        <dbReference type="ChEBI" id="CHEBI:246422"/>
        <dbReference type="EC" id="3.6.1.9"/>
    </reaction>
</comment>
<comment type="catalytic activity">
    <reaction evidence="1">
        <text>dUTP + H2O = dUMP + diphosphate + H(+)</text>
        <dbReference type="Rhea" id="RHEA:10248"/>
        <dbReference type="ChEBI" id="CHEBI:15377"/>
        <dbReference type="ChEBI" id="CHEBI:15378"/>
        <dbReference type="ChEBI" id="CHEBI:33019"/>
        <dbReference type="ChEBI" id="CHEBI:61555"/>
        <dbReference type="ChEBI" id="CHEBI:246422"/>
        <dbReference type="EC" id="3.6.1.23"/>
    </reaction>
</comment>
<comment type="catalytic activity">
    <reaction evidence="1">
        <text>dTTP + H2O = dTMP + diphosphate + H(+)</text>
        <dbReference type="Rhea" id="RHEA:28534"/>
        <dbReference type="ChEBI" id="CHEBI:15377"/>
        <dbReference type="ChEBI" id="CHEBI:15378"/>
        <dbReference type="ChEBI" id="CHEBI:33019"/>
        <dbReference type="ChEBI" id="CHEBI:37568"/>
        <dbReference type="ChEBI" id="CHEBI:63528"/>
        <dbReference type="EC" id="3.6.1.9"/>
    </reaction>
</comment>
<comment type="catalytic activity">
    <reaction evidence="1">
        <text>dCTP + H2O = dCMP + diphosphate + H(+)</text>
        <dbReference type="Rhea" id="RHEA:22636"/>
        <dbReference type="ChEBI" id="CHEBI:15377"/>
        <dbReference type="ChEBI" id="CHEBI:15378"/>
        <dbReference type="ChEBI" id="CHEBI:33019"/>
        <dbReference type="ChEBI" id="CHEBI:57566"/>
        <dbReference type="ChEBI" id="CHEBI:61481"/>
        <dbReference type="EC" id="3.6.1.9"/>
    </reaction>
</comment>
<comment type="catalytic activity">
    <reaction evidence="1">
        <text>dCTP + H2O = dCMP + diphosphate + H(+)</text>
        <dbReference type="Rhea" id="RHEA:22636"/>
        <dbReference type="ChEBI" id="CHEBI:15377"/>
        <dbReference type="ChEBI" id="CHEBI:15378"/>
        <dbReference type="ChEBI" id="CHEBI:33019"/>
        <dbReference type="ChEBI" id="CHEBI:57566"/>
        <dbReference type="ChEBI" id="CHEBI:61481"/>
        <dbReference type="EC" id="3.6.1.12"/>
    </reaction>
</comment>
<comment type="cofactor">
    <cofactor evidence="1">
        <name>Mg(2+)</name>
        <dbReference type="ChEBI" id="CHEBI:18420"/>
    </cofactor>
</comment>
<comment type="subunit">
    <text evidence="1">Monomer.</text>
</comment>
<comment type="similarity">
    <text evidence="1">Belongs to the Nudix hydrolase family. NudI subfamily.</text>
</comment>
<dbReference type="EC" id="3.6.1.9" evidence="1"/>
<dbReference type="EC" id="3.6.1.12" evidence="1"/>
<dbReference type="EC" id="3.6.1.-" evidence="1"/>
<dbReference type="EC" id="3.6.1.23" evidence="1"/>
<dbReference type="EMBL" id="CP000026">
    <property type="protein sequence ID" value="AAV76570.1"/>
    <property type="molecule type" value="Genomic_DNA"/>
</dbReference>
<dbReference type="RefSeq" id="WP_001249902.1">
    <property type="nucleotide sequence ID" value="NC_006511.1"/>
</dbReference>
<dbReference type="SMR" id="Q5PC77"/>
<dbReference type="KEGG" id="spt:SPA0568"/>
<dbReference type="HOGENOM" id="CLU_037162_31_0_6"/>
<dbReference type="Proteomes" id="UP000008185">
    <property type="component" value="Chromosome"/>
</dbReference>
<dbReference type="GO" id="GO:0047840">
    <property type="term" value="F:dCTP diphosphatase activity"/>
    <property type="evidence" value="ECO:0007669"/>
    <property type="project" value="UniProtKB-EC"/>
</dbReference>
<dbReference type="GO" id="GO:0036218">
    <property type="term" value="F:dTTP diphosphatase activity"/>
    <property type="evidence" value="ECO:0007669"/>
    <property type="project" value="RHEA"/>
</dbReference>
<dbReference type="GO" id="GO:0004170">
    <property type="term" value="F:dUTP diphosphatase activity"/>
    <property type="evidence" value="ECO:0007669"/>
    <property type="project" value="UniProtKB-EC"/>
</dbReference>
<dbReference type="GO" id="GO:0000287">
    <property type="term" value="F:magnesium ion binding"/>
    <property type="evidence" value="ECO:0007669"/>
    <property type="project" value="UniProtKB-UniRule"/>
</dbReference>
<dbReference type="CDD" id="cd04696">
    <property type="entry name" value="NUDIX_NudI"/>
    <property type="match status" value="1"/>
</dbReference>
<dbReference type="Gene3D" id="3.90.79.10">
    <property type="entry name" value="Nucleoside Triphosphate Pyrophosphohydrolase"/>
    <property type="match status" value="1"/>
</dbReference>
<dbReference type="HAMAP" id="MF_01846">
    <property type="entry name" value="Nudix_NudI"/>
    <property type="match status" value="1"/>
</dbReference>
<dbReference type="InterPro" id="IPR023781">
    <property type="entry name" value="Nucleoside_triphosphatase_NudI"/>
</dbReference>
<dbReference type="InterPro" id="IPR020476">
    <property type="entry name" value="Nudix_hydrolase"/>
</dbReference>
<dbReference type="InterPro" id="IPR015797">
    <property type="entry name" value="NUDIX_hydrolase-like_dom_sf"/>
</dbReference>
<dbReference type="InterPro" id="IPR020084">
    <property type="entry name" value="NUDIX_hydrolase_CS"/>
</dbReference>
<dbReference type="InterPro" id="IPR000086">
    <property type="entry name" value="NUDIX_hydrolase_dom"/>
</dbReference>
<dbReference type="NCBIfam" id="NF012016">
    <property type="entry name" value="PRK15472.1"/>
    <property type="match status" value="1"/>
</dbReference>
<dbReference type="PANTHER" id="PTHR43046">
    <property type="entry name" value="GDP-MANNOSE MANNOSYL HYDROLASE"/>
    <property type="match status" value="1"/>
</dbReference>
<dbReference type="PANTHER" id="PTHR43046:SF14">
    <property type="entry name" value="MUTT_NUDIX FAMILY PROTEIN"/>
    <property type="match status" value="1"/>
</dbReference>
<dbReference type="Pfam" id="PF00293">
    <property type="entry name" value="NUDIX"/>
    <property type="match status" value="1"/>
</dbReference>
<dbReference type="PRINTS" id="PR00502">
    <property type="entry name" value="NUDIXFAMILY"/>
</dbReference>
<dbReference type="SUPFAM" id="SSF55811">
    <property type="entry name" value="Nudix"/>
    <property type="match status" value="1"/>
</dbReference>
<dbReference type="PROSITE" id="PS51462">
    <property type="entry name" value="NUDIX"/>
    <property type="match status" value="1"/>
</dbReference>
<dbReference type="PROSITE" id="PS00893">
    <property type="entry name" value="NUDIX_BOX"/>
    <property type="match status" value="1"/>
</dbReference>